<proteinExistence type="evidence at transcript level"/>
<organism>
    <name type="scientific">Pongo pygmaeus</name>
    <name type="common">Bornean orangutan</name>
    <dbReference type="NCBI Taxonomy" id="9600"/>
    <lineage>
        <taxon>Eukaryota</taxon>
        <taxon>Metazoa</taxon>
        <taxon>Chordata</taxon>
        <taxon>Craniata</taxon>
        <taxon>Vertebrata</taxon>
        <taxon>Euteleostomi</taxon>
        <taxon>Mammalia</taxon>
        <taxon>Eutheria</taxon>
        <taxon>Euarchontoglires</taxon>
        <taxon>Primates</taxon>
        <taxon>Haplorrhini</taxon>
        <taxon>Catarrhini</taxon>
        <taxon>Hominidae</taxon>
        <taxon>Pongo</taxon>
    </lineage>
</organism>
<reference key="1">
    <citation type="journal article" date="2001" name="Am. J. Hum. Genet.">
        <title>Primate DAX1, SRY, and SOX9: evolutionary stratification of sex-determination pathway.</title>
        <authorList>
            <person name="Patel M."/>
            <person name="Dorman K.S."/>
            <person name="Zhang Y.-H."/>
            <person name="Huang B.-L."/>
            <person name="Arnold A.P."/>
            <person name="Sinsheimer J.S."/>
            <person name="Vilain E."/>
            <person name="McCabe E.R.B."/>
        </authorList>
    </citation>
    <scope>NUCLEOTIDE SEQUENCE [MRNA]</scope>
</reference>
<evidence type="ECO:0000250" key="1">
    <source>
        <dbReference type="UniProtKB" id="P48436"/>
    </source>
</evidence>
<evidence type="ECO:0000250" key="2">
    <source>
        <dbReference type="UniProtKB" id="Q04887"/>
    </source>
</evidence>
<evidence type="ECO:0000255" key="3">
    <source>
        <dbReference type="PROSITE-ProRule" id="PRU00267"/>
    </source>
</evidence>
<evidence type="ECO:0000256" key="4">
    <source>
        <dbReference type="SAM" id="MobiDB-lite"/>
    </source>
</evidence>
<evidence type="ECO:0000305" key="5"/>
<accession>P61754</accession>
<name>SOX9_PONPY</name>
<comment type="function">
    <text evidence="2">Transcription factor that plays a key role in chondrocytes differentiation and skeletal development. Specifically binds the 5'-ACAAAG-3' DNA motif present in enhancers and super-enhancers and promotes expression of genes important for chondrogenesis, including cartilage matrix protein-coding genes COL2A1, COL4A2, COL9A1, COL11A2 and ACAN, SOX5 and SOX6. Also binds to some promoter regions. Plays a central role in successive steps of chondrocyte differentiation. Absolutely required for precartilaginous condensation, the first step in chondrogenesis during which skeletal progenitors differentiate into prechondrocytes. Together with SOX5 and SOX6, required for overt chondrogenesis when condensed prechondrocytes differentiate into early stage chondrocytes, the second step in chondrogenesis. Later, required to direct hypertrophic maturation and block osteoblast differentiation of growth plate chondrocytes: maintains chondrocyte columnar proliferation, delays prehypertrophy and then prevents osteoblastic differentiation of chondrocytes by lowering beta-catenin (CTNNB1) signaling and RUNX2 expression. Also required for chondrocyte hypertrophy, both indirectly, by keeping the lineage fate of chondrocytes, and directly, by remaining present in upper hypertrophic cells and transactivating COL10A1 along with MEF2C. Low lipid levels are the main nutritional determinant for chondrogenic commitment of skeletal progenitor cells: when lipids levels are low, FOXO (FOXO1 and FOXO3) transcription factors promote expression of SOX9, which induces chondrogenic commitment and suppresses fatty acid oxidation. Mechanistically, helps, but is not required, to remove epigenetic signatures of transcriptional repression and deposit active promoter and enhancer marks at chondrocyte-specific genes. Acts in cooperation with the Hedgehog pathway-dependent GLI (GLI1 and GLI3) transcription factors. In addition to cartilage development, also acts as a regulator of proliferation and differentiation in epithelial stem/progenitor cells: involved in the lung epithelium during branching morphogenesis, by balancing proliferation and differentiation and regulating the extracellular matrix. Controls epithelial branching during kidney development.</text>
</comment>
<comment type="subunit">
    <text evidence="1 2">Homodimer; homodimerization is required for activity. Interacts (via C-terminus) with ZNF219; forming a complex that binds to the COL2A1 promoter and activates COL2A1 expression (By similarity). Interacts with DDRGK1. Interacts with EP300/p300 (By similarity). Interacts with beta-catenin (CTNNB1); inhibiting CTNNB1 activity by competing with the binding sites of TCF/LEF within CTNNB1 (By similarity).</text>
</comment>
<comment type="subcellular location">
    <subcellularLocation>
        <location evidence="2 3">Nucleus</location>
    </subcellularLocation>
</comment>
<comment type="domain">
    <text evidence="1">The transactivation domains TAM and TAC (for transactivation domain in the middle and at the C-terminus, respectively) are required to contact transcriptional coactivators and basal transcriptional machinery components and thereby induce gene transactivation.</text>
</comment>
<comment type="domain">
    <text evidence="1">The 9aaTAD motif is a transactivation domain present in a large number of yeast and animal transcription factors.</text>
</comment>
<comment type="domain">
    <text evidence="1">The PQA region (for proline, glutamine and alanine-rich) helps stabilize SOX9 and facilitates transactivation. It lacks intrinsic transactivation capability.</text>
</comment>
<comment type="PTM">
    <text evidence="2">Acetylated; acetylation impairs nuclear localization and ability to transactivate expression of target genes. Deacetylated by SIRT1.</text>
</comment>
<comment type="PTM">
    <text evidence="2">Phosphorylation at Ser-64 and Ser-211 by PKA increases transcriptional activity and may help delay chondrocyte maturation downstream of PTHLH/PTHrP signaling. Phosphorylation at either Ser-64 or Ser-211 is required for sumoylation, but phosphorylation is not dependent on sumoylation. Phosphorylated on tyrosine residues; tyrosine dephosphorylation by PTPN11/SHP2 blocks SOX9 phosphorylation by PKA and subsequent SUMOylation.</text>
</comment>
<comment type="PTM">
    <text evidence="2">Sumoylated; phosphorylation at either Ser-64 or Ser-211 is required for sumoylation. Sumoylation is induced by BMP signaling pathway.</text>
</comment>
<comment type="PTM">
    <text evidence="2">Ubiquitinated; ubiquitination leads to proteasomal degradation and is negatively regulated by DDRGK1.</text>
</comment>
<dbReference type="EMBL" id="AF322898">
    <property type="protein sequence ID" value="AAK01649.1"/>
    <property type="molecule type" value="mRNA"/>
</dbReference>
<dbReference type="SMR" id="P61754"/>
<dbReference type="GO" id="GO:0005634">
    <property type="term" value="C:nucleus"/>
    <property type="evidence" value="ECO:0000250"/>
    <property type="project" value="UniProtKB"/>
</dbReference>
<dbReference type="GO" id="GO:0032991">
    <property type="term" value="C:protein-containing complex"/>
    <property type="evidence" value="ECO:0000250"/>
    <property type="project" value="UniProtKB"/>
</dbReference>
<dbReference type="GO" id="GO:0003682">
    <property type="term" value="F:chromatin binding"/>
    <property type="evidence" value="ECO:0000250"/>
    <property type="project" value="UniProtKB"/>
</dbReference>
<dbReference type="GO" id="GO:0000987">
    <property type="term" value="F:cis-regulatory region sequence-specific DNA binding"/>
    <property type="evidence" value="ECO:0000250"/>
    <property type="project" value="UniProtKB"/>
</dbReference>
<dbReference type="GO" id="GO:0003677">
    <property type="term" value="F:DNA binding"/>
    <property type="evidence" value="ECO:0000250"/>
    <property type="project" value="UniProtKB"/>
</dbReference>
<dbReference type="GO" id="GO:0001228">
    <property type="term" value="F:DNA-binding transcription activator activity, RNA polymerase II-specific"/>
    <property type="evidence" value="ECO:0000250"/>
    <property type="project" value="UniProtKB"/>
</dbReference>
<dbReference type="GO" id="GO:0003700">
    <property type="term" value="F:DNA-binding transcription factor activity"/>
    <property type="evidence" value="ECO:0000250"/>
    <property type="project" value="UniProtKB"/>
</dbReference>
<dbReference type="GO" id="GO:0000981">
    <property type="term" value="F:DNA-binding transcription factor activity, RNA polymerase II-specific"/>
    <property type="evidence" value="ECO:0000250"/>
    <property type="project" value="UniProtKB"/>
</dbReference>
<dbReference type="GO" id="GO:0000978">
    <property type="term" value="F:RNA polymerase II cis-regulatory region sequence-specific DNA binding"/>
    <property type="evidence" value="ECO:0000250"/>
    <property type="project" value="UniProtKB"/>
</dbReference>
<dbReference type="GO" id="GO:0043565">
    <property type="term" value="F:sequence-specific DNA binding"/>
    <property type="evidence" value="ECO:0000250"/>
    <property type="project" value="UniProtKB"/>
</dbReference>
<dbReference type="GO" id="GO:0001502">
    <property type="term" value="P:cartilage condensation"/>
    <property type="evidence" value="ECO:0000250"/>
    <property type="project" value="UniProtKB"/>
</dbReference>
<dbReference type="GO" id="GO:0051216">
    <property type="term" value="P:cartilage development"/>
    <property type="evidence" value="ECO:0000250"/>
    <property type="project" value="UniProtKB"/>
</dbReference>
<dbReference type="GO" id="GO:0001708">
    <property type="term" value="P:cell fate specification"/>
    <property type="evidence" value="ECO:0000250"/>
    <property type="project" value="UniProtKB"/>
</dbReference>
<dbReference type="GO" id="GO:0071773">
    <property type="term" value="P:cellular response to BMP stimulus"/>
    <property type="evidence" value="ECO:0000250"/>
    <property type="project" value="UniProtKB"/>
</dbReference>
<dbReference type="GO" id="GO:0071364">
    <property type="term" value="P:cellular response to epidermal growth factor stimulus"/>
    <property type="evidence" value="ECO:0000250"/>
    <property type="project" value="UniProtKB"/>
</dbReference>
<dbReference type="GO" id="GO:0071504">
    <property type="term" value="P:cellular response to heparin"/>
    <property type="evidence" value="ECO:0000250"/>
    <property type="project" value="UniProtKB"/>
</dbReference>
<dbReference type="GO" id="GO:0071260">
    <property type="term" value="P:cellular response to mechanical stimulus"/>
    <property type="evidence" value="ECO:0000250"/>
    <property type="project" value="UniProtKB"/>
</dbReference>
<dbReference type="GO" id="GO:0071560">
    <property type="term" value="P:cellular response to transforming growth factor beta stimulus"/>
    <property type="evidence" value="ECO:0000250"/>
    <property type="project" value="UniProtKB"/>
</dbReference>
<dbReference type="GO" id="GO:0002062">
    <property type="term" value="P:chondrocyte differentiation"/>
    <property type="evidence" value="ECO:0000250"/>
    <property type="project" value="UniProtKB"/>
</dbReference>
<dbReference type="GO" id="GO:0003413">
    <property type="term" value="P:chondrocyte differentiation involved in endochondral bone morphogenesis"/>
    <property type="evidence" value="ECO:0000250"/>
    <property type="project" value="UniProtKB"/>
</dbReference>
<dbReference type="GO" id="GO:0003415">
    <property type="term" value="P:chondrocyte hypertrophy"/>
    <property type="evidence" value="ECO:0000250"/>
    <property type="project" value="UniProtKB"/>
</dbReference>
<dbReference type="GO" id="GO:0006338">
    <property type="term" value="P:chromatin remodeling"/>
    <property type="evidence" value="ECO:0000250"/>
    <property type="project" value="UniProtKB"/>
</dbReference>
<dbReference type="GO" id="GO:0090103">
    <property type="term" value="P:cochlea morphogenesis"/>
    <property type="evidence" value="ECO:0000250"/>
    <property type="project" value="UniProtKB"/>
</dbReference>
<dbReference type="GO" id="GO:0003203">
    <property type="term" value="P:endocardial cushion morphogenesis"/>
    <property type="evidence" value="ECO:0000250"/>
    <property type="project" value="UniProtKB"/>
</dbReference>
<dbReference type="GO" id="GO:0007173">
    <property type="term" value="P:epidermal growth factor receptor signaling pathway"/>
    <property type="evidence" value="ECO:0000250"/>
    <property type="project" value="UniProtKB"/>
</dbReference>
<dbReference type="GO" id="GO:0060517">
    <property type="term" value="P:epithelial cell proliferation involved in prostatic bud elongation"/>
    <property type="evidence" value="ECO:0000250"/>
    <property type="project" value="UniProtKB"/>
</dbReference>
<dbReference type="GO" id="GO:0001837">
    <property type="term" value="P:epithelial to mesenchymal transition"/>
    <property type="evidence" value="ECO:0000250"/>
    <property type="project" value="UniProtKB"/>
</dbReference>
<dbReference type="GO" id="GO:0070371">
    <property type="term" value="P:ERK1 and ERK2 cascade"/>
    <property type="evidence" value="ECO:0000250"/>
    <property type="project" value="UniProtKB"/>
</dbReference>
<dbReference type="GO" id="GO:0003430">
    <property type="term" value="P:growth plate cartilage chondrocyte growth"/>
    <property type="evidence" value="ECO:0000250"/>
    <property type="project" value="UniProtKB"/>
</dbReference>
<dbReference type="GO" id="GO:0001942">
    <property type="term" value="P:hair follicle development"/>
    <property type="evidence" value="ECO:0000250"/>
    <property type="project" value="UniProtKB"/>
</dbReference>
<dbReference type="GO" id="GO:0003170">
    <property type="term" value="P:heart valve development"/>
    <property type="evidence" value="ECO:0000250"/>
    <property type="project" value="UniProtKB"/>
</dbReference>
<dbReference type="GO" id="GO:0003179">
    <property type="term" value="P:heart valve morphogenesis"/>
    <property type="evidence" value="ECO:0000250"/>
    <property type="project" value="UniProtKB"/>
</dbReference>
<dbReference type="GO" id="GO:0060729">
    <property type="term" value="P:intestinal epithelial structure maintenance"/>
    <property type="evidence" value="ECO:0000250"/>
    <property type="project" value="UniProtKB"/>
</dbReference>
<dbReference type="GO" id="GO:0019100">
    <property type="term" value="P:male germ-line sex determination"/>
    <property type="evidence" value="ECO:0000250"/>
    <property type="project" value="UniProtKB"/>
</dbReference>
<dbReference type="GO" id="GO:0008584">
    <property type="term" value="P:male gonad development"/>
    <property type="evidence" value="ECO:0000250"/>
    <property type="project" value="UniProtKB"/>
</dbReference>
<dbReference type="GO" id="GO:0072289">
    <property type="term" value="P:metanephric nephron tubule formation"/>
    <property type="evidence" value="ECO:0000250"/>
    <property type="project" value="UniProtKB"/>
</dbReference>
<dbReference type="GO" id="GO:0061138">
    <property type="term" value="P:morphogenesis of a branching epithelium"/>
    <property type="evidence" value="ECO:0000250"/>
    <property type="project" value="UniProtKB"/>
</dbReference>
<dbReference type="GO" id="GO:0043066">
    <property type="term" value="P:negative regulation of apoptotic process"/>
    <property type="evidence" value="ECO:0000250"/>
    <property type="project" value="UniProtKB"/>
</dbReference>
<dbReference type="GO" id="GO:0070168">
    <property type="term" value="P:negative regulation of biomineral tissue development"/>
    <property type="evidence" value="ECO:0000250"/>
    <property type="project" value="UniProtKB"/>
</dbReference>
<dbReference type="GO" id="GO:0090090">
    <property type="term" value="P:negative regulation of canonical Wnt signaling pathway"/>
    <property type="evidence" value="ECO:0000250"/>
    <property type="project" value="UniProtKB"/>
</dbReference>
<dbReference type="GO" id="GO:0032331">
    <property type="term" value="P:negative regulation of chondrocyte differentiation"/>
    <property type="evidence" value="ECO:0000250"/>
    <property type="project" value="UniProtKB"/>
</dbReference>
<dbReference type="GO" id="GO:0045892">
    <property type="term" value="P:negative regulation of DNA-templated transcription"/>
    <property type="evidence" value="ECO:0000250"/>
    <property type="project" value="UniProtKB"/>
</dbReference>
<dbReference type="GO" id="GO:0050680">
    <property type="term" value="P:negative regulation of epithelial cell proliferation"/>
    <property type="evidence" value="ECO:0000250"/>
    <property type="project" value="UniProtKB"/>
</dbReference>
<dbReference type="GO" id="GO:0046322">
    <property type="term" value="P:negative regulation of fatty acid oxidation"/>
    <property type="evidence" value="ECO:0000250"/>
    <property type="project" value="UniProtKB"/>
</dbReference>
<dbReference type="GO" id="GO:0002683">
    <property type="term" value="P:negative regulation of immune system process"/>
    <property type="evidence" value="ECO:0000250"/>
    <property type="project" value="UniProtKB"/>
</dbReference>
<dbReference type="GO" id="GO:0045662">
    <property type="term" value="P:negative regulation of myoblast differentiation"/>
    <property type="evidence" value="ECO:0000250"/>
    <property type="project" value="UniProtKB"/>
</dbReference>
<dbReference type="GO" id="GO:0030279">
    <property type="term" value="P:negative regulation of ossification"/>
    <property type="evidence" value="ECO:0000250"/>
    <property type="project" value="UniProtKB"/>
</dbReference>
<dbReference type="GO" id="GO:0045668">
    <property type="term" value="P:negative regulation of osteoblast differentiation"/>
    <property type="evidence" value="ECO:0000250"/>
    <property type="project" value="UniProtKB"/>
</dbReference>
<dbReference type="GO" id="GO:0046533">
    <property type="term" value="P:negative regulation of photoreceptor cell differentiation"/>
    <property type="evidence" value="ECO:0000250"/>
    <property type="project" value="UniProtKB"/>
</dbReference>
<dbReference type="GO" id="GO:0000122">
    <property type="term" value="P:negative regulation of transcription by RNA polymerase II"/>
    <property type="evidence" value="ECO:0007669"/>
    <property type="project" value="TreeGrafter"/>
</dbReference>
<dbReference type="GO" id="GO:0014036">
    <property type="term" value="P:neural crest cell fate specification"/>
    <property type="evidence" value="ECO:0000250"/>
    <property type="project" value="UniProtKB"/>
</dbReference>
<dbReference type="GO" id="GO:0006334">
    <property type="term" value="P:nucleosome assembly"/>
    <property type="evidence" value="ECO:0000250"/>
    <property type="project" value="UniProtKB"/>
</dbReference>
<dbReference type="GO" id="GO:0048709">
    <property type="term" value="P:oligodendrocyte differentiation"/>
    <property type="evidence" value="ECO:0007669"/>
    <property type="project" value="TreeGrafter"/>
</dbReference>
<dbReference type="GO" id="GO:0030916">
    <property type="term" value="P:otic vesicle formation"/>
    <property type="evidence" value="ECO:0000250"/>
    <property type="project" value="UniProtKB"/>
</dbReference>
<dbReference type="GO" id="GO:0090190">
    <property type="term" value="P:positive regulation of branching involved in ureteric bud morphogenesis"/>
    <property type="evidence" value="ECO:0000250"/>
    <property type="project" value="UniProtKB"/>
</dbReference>
<dbReference type="GO" id="GO:0061036">
    <property type="term" value="P:positive regulation of cartilage development"/>
    <property type="evidence" value="ECO:0000250"/>
    <property type="project" value="UniProtKB"/>
</dbReference>
<dbReference type="GO" id="GO:0008284">
    <property type="term" value="P:positive regulation of cell population proliferation"/>
    <property type="evidence" value="ECO:0000250"/>
    <property type="project" value="UniProtKB"/>
</dbReference>
<dbReference type="GO" id="GO:0032332">
    <property type="term" value="P:positive regulation of chondrocyte differentiation"/>
    <property type="evidence" value="ECO:0000250"/>
    <property type="project" value="UniProtKB"/>
</dbReference>
<dbReference type="GO" id="GO:0030858">
    <property type="term" value="P:positive regulation of epithelial cell differentiation"/>
    <property type="evidence" value="ECO:0000250"/>
    <property type="project" value="UniProtKB"/>
</dbReference>
<dbReference type="GO" id="GO:0010634">
    <property type="term" value="P:positive regulation of epithelial cell migration"/>
    <property type="evidence" value="ECO:0000250"/>
    <property type="project" value="UniProtKB"/>
</dbReference>
<dbReference type="GO" id="GO:0050679">
    <property type="term" value="P:positive regulation of epithelial cell proliferation"/>
    <property type="evidence" value="ECO:0000250"/>
    <property type="project" value="UniProtKB"/>
</dbReference>
<dbReference type="GO" id="GO:0010628">
    <property type="term" value="P:positive regulation of gene expression"/>
    <property type="evidence" value="ECO:0000250"/>
    <property type="project" value="UniProtKB"/>
</dbReference>
<dbReference type="GO" id="GO:0090184">
    <property type="term" value="P:positive regulation of kidney development"/>
    <property type="evidence" value="ECO:0000250"/>
    <property type="project" value="UniProtKB"/>
</dbReference>
<dbReference type="GO" id="GO:2000020">
    <property type="term" value="P:positive regulation of male gonad development"/>
    <property type="evidence" value="ECO:0000250"/>
    <property type="project" value="UniProtKB"/>
</dbReference>
<dbReference type="GO" id="GO:0002053">
    <property type="term" value="P:positive regulation of mesenchymal cell proliferation"/>
    <property type="evidence" value="ECO:0000250"/>
    <property type="project" value="UniProtKB"/>
</dbReference>
<dbReference type="GO" id="GO:2000741">
    <property type="term" value="P:positive regulation of mesenchymal stem cell differentiation"/>
    <property type="evidence" value="ECO:0000250"/>
    <property type="project" value="UniProtKB"/>
</dbReference>
<dbReference type="GO" id="GO:0045944">
    <property type="term" value="P:positive regulation of transcription by RNA polymerase II"/>
    <property type="evidence" value="ECO:0000250"/>
    <property type="project" value="UniProtKB"/>
</dbReference>
<dbReference type="GO" id="GO:0065003">
    <property type="term" value="P:protein-containing complex assembly"/>
    <property type="evidence" value="ECO:0000250"/>
    <property type="project" value="UniProtKB"/>
</dbReference>
<dbReference type="GO" id="GO:0042981">
    <property type="term" value="P:regulation of apoptotic process"/>
    <property type="evidence" value="ECO:0000250"/>
    <property type="project" value="UniProtKB"/>
</dbReference>
<dbReference type="GO" id="GO:0061035">
    <property type="term" value="P:regulation of cartilage development"/>
    <property type="evidence" value="ECO:0000250"/>
    <property type="project" value="UniProtKB"/>
</dbReference>
<dbReference type="GO" id="GO:0010564">
    <property type="term" value="P:regulation of cell cycle process"/>
    <property type="evidence" value="ECO:0000250"/>
    <property type="project" value="UniProtKB"/>
</dbReference>
<dbReference type="GO" id="GO:0042127">
    <property type="term" value="P:regulation of cell population proliferation"/>
    <property type="evidence" value="ECO:0000250"/>
    <property type="project" value="UniProtKB"/>
</dbReference>
<dbReference type="GO" id="GO:0060784">
    <property type="term" value="P:regulation of cell proliferation involved in tissue homeostasis"/>
    <property type="evidence" value="ECO:0000250"/>
    <property type="project" value="UniProtKB"/>
</dbReference>
<dbReference type="GO" id="GO:0072034">
    <property type="term" value="P:renal vesicle induction"/>
    <property type="evidence" value="ECO:0000250"/>
    <property type="project" value="UniProtKB"/>
</dbReference>
<dbReference type="GO" id="GO:0070542">
    <property type="term" value="P:response to fatty acid"/>
    <property type="evidence" value="ECO:0000250"/>
    <property type="project" value="UniProtKB"/>
</dbReference>
<dbReference type="GO" id="GO:0060041">
    <property type="term" value="P:retina development in camera-type eye"/>
    <property type="evidence" value="ECO:0000250"/>
    <property type="project" value="UniProtKB"/>
</dbReference>
<dbReference type="GO" id="GO:0060221">
    <property type="term" value="P:retinal rod cell differentiation"/>
    <property type="evidence" value="ECO:0000250"/>
    <property type="project" value="UniProtKB"/>
</dbReference>
<dbReference type="GO" id="GO:0060008">
    <property type="term" value="P:Sertoli cell differentiation"/>
    <property type="evidence" value="ECO:0000250"/>
    <property type="project" value="UniProtKB"/>
</dbReference>
<dbReference type="GO" id="GO:0007165">
    <property type="term" value="P:signal transduction"/>
    <property type="evidence" value="ECO:0000250"/>
    <property type="project" value="UniProtKB"/>
</dbReference>
<dbReference type="GO" id="GO:0001501">
    <property type="term" value="P:skeletal system development"/>
    <property type="evidence" value="ECO:0000250"/>
    <property type="project" value="UniProtKB"/>
</dbReference>
<dbReference type="GO" id="GO:0035019">
    <property type="term" value="P:somatic stem cell population maintenance"/>
    <property type="evidence" value="ECO:0000250"/>
    <property type="project" value="UniProtKB"/>
</dbReference>
<dbReference type="GO" id="GO:0007283">
    <property type="term" value="P:spermatogenesis"/>
    <property type="evidence" value="ECO:0000250"/>
    <property type="project" value="UniProtKB"/>
</dbReference>
<dbReference type="GO" id="GO:0001894">
    <property type="term" value="P:tissue homeostasis"/>
    <property type="evidence" value="ECO:0000250"/>
    <property type="project" value="UniProtKB"/>
</dbReference>
<dbReference type="CDD" id="cd22031">
    <property type="entry name" value="HMG-box_SoxE"/>
    <property type="match status" value="1"/>
</dbReference>
<dbReference type="FunFam" id="1.10.30.10:FF:000004">
    <property type="entry name" value="Transcription factor SOX-10"/>
    <property type="match status" value="1"/>
</dbReference>
<dbReference type="Gene3D" id="1.10.30.10">
    <property type="entry name" value="High mobility group box domain"/>
    <property type="match status" value="1"/>
</dbReference>
<dbReference type="InterPro" id="IPR009071">
    <property type="entry name" value="HMG_box_dom"/>
</dbReference>
<dbReference type="InterPro" id="IPR036910">
    <property type="entry name" value="HMG_box_dom_sf"/>
</dbReference>
<dbReference type="InterPro" id="IPR022151">
    <property type="entry name" value="Sox_N"/>
</dbReference>
<dbReference type="InterPro" id="IPR050917">
    <property type="entry name" value="SOX_TF"/>
</dbReference>
<dbReference type="PANTHER" id="PTHR45803">
    <property type="entry name" value="SOX100B"/>
    <property type="match status" value="1"/>
</dbReference>
<dbReference type="PANTHER" id="PTHR45803:SF1">
    <property type="entry name" value="TRANSCRIPTION FACTOR SOX-9"/>
    <property type="match status" value="1"/>
</dbReference>
<dbReference type="Pfam" id="PF00505">
    <property type="entry name" value="HMG_box"/>
    <property type="match status" value="1"/>
</dbReference>
<dbReference type="Pfam" id="PF12444">
    <property type="entry name" value="Sox_N"/>
    <property type="match status" value="1"/>
</dbReference>
<dbReference type="SMART" id="SM00398">
    <property type="entry name" value="HMG"/>
    <property type="match status" value="1"/>
</dbReference>
<dbReference type="SUPFAM" id="SSF47095">
    <property type="entry name" value="HMG-box"/>
    <property type="match status" value="1"/>
</dbReference>
<dbReference type="PROSITE" id="PS50118">
    <property type="entry name" value="HMG_BOX_2"/>
    <property type="match status" value="1"/>
</dbReference>
<protein>
    <recommendedName>
        <fullName evidence="5">Transcription factor SOX-9</fullName>
    </recommendedName>
</protein>
<sequence>MNLLDPFMKMTDEQEKGLSGAPSPTMSEDSAGSPCPSGSGSDTENTRPQENTFPKGEPDLKKESEEDKFPVCIREAVSQVLKGYDWTLVPMPVRVNGSSKNKPHVKRPMNAFMVWAQAARRKLADQYPHLHNAELSKTLGKLWRLLNESEKRPFVEEAERLRVQHKKDHPDYKYQPRRRKSVKNGQAEAEEATEQTHISPNAIFKALQADSPHSSSGMSEVHSPGEHSGQSQGPPTPPTTPKTDVQPGKADLKREGRPLPEGGRQPPIDFRDVDIGELSSDVISNIETFDVNEFDQYLPPNGHPGVPATHGQVTYTGSYGISSTAATPASAGHVWMSKQQAPPPPPQQPPQAPPAPQAPPQPQAAPPQQPAAPPQQPQAHTLTTLSSEPGQSQRTHIKTEQLSPSHYSEQQQHSPQQIAYSPFNLPHYSPSYPPITRSQYDYTDHQNSSSYYSHAAGQGTGLYSTFTYMNPAQRPMYTPIADTSGVPSIPQTHSPQHWEQPVYTQLTRP</sequence>
<feature type="chain" id="PRO_0000048743" description="Transcription factor SOX-9">
    <location>
        <begin position="1"/>
        <end position="509"/>
    </location>
</feature>
<feature type="DNA-binding region" description="HMG box" evidence="3">
    <location>
        <begin position="105"/>
        <end position="173"/>
    </location>
</feature>
<feature type="region of interest" description="Disordered" evidence="4">
    <location>
        <begin position="1"/>
        <end position="67"/>
    </location>
</feature>
<feature type="region of interest" description="Dimerization (DIM)" evidence="1">
    <location>
        <begin position="63"/>
        <end position="103"/>
    </location>
</feature>
<feature type="region of interest" description="PQA" evidence="1">
    <location>
        <begin position="63"/>
        <end position="103"/>
    </location>
</feature>
<feature type="region of interest" description="Disordered" evidence="4">
    <location>
        <begin position="160"/>
        <end position="273"/>
    </location>
</feature>
<feature type="region of interest" description="Transactivation domain (TAM)" evidence="1">
    <location>
        <begin position="224"/>
        <end position="307"/>
    </location>
</feature>
<feature type="region of interest" description="Disordered" evidence="4">
    <location>
        <begin position="330"/>
        <end position="415"/>
    </location>
</feature>
<feature type="region of interest" description="Transactivation domain (TAC)" evidence="1">
    <location>
        <begin position="394"/>
        <end position="509"/>
    </location>
</feature>
<feature type="region of interest" description="Disordered" evidence="4">
    <location>
        <begin position="479"/>
        <end position="509"/>
    </location>
</feature>
<feature type="short sequence motif" description="9aaTAD 1" evidence="1">
    <location>
        <begin position="275"/>
        <end position="284"/>
    </location>
</feature>
<feature type="short sequence motif" description="9aaTAD 2" evidence="1">
    <location>
        <begin position="290"/>
        <end position="298"/>
    </location>
</feature>
<feature type="short sequence motif" description="9aaTAD 3" evidence="1">
    <location>
        <begin position="460"/>
        <end position="468"/>
    </location>
</feature>
<feature type="compositionally biased region" description="Low complexity" evidence="4">
    <location>
        <begin position="30"/>
        <end position="41"/>
    </location>
</feature>
<feature type="compositionally biased region" description="Polar residues" evidence="4">
    <location>
        <begin position="42"/>
        <end position="52"/>
    </location>
</feature>
<feature type="compositionally biased region" description="Basic and acidic residues" evidence="4">
    <location>
        <begin position="56"/>
        <end position="67"/>
    </location>
</feature>
<feature type="compositionally biased region" description="Basic and acidic residues" evidence="4">
    <location>
        <begin position="160"/>
        <end position="174"/>
    </location>
</feature>
<feature type="compositionally biased region" description="Pro residues" evidence="4">
    <location>
        <begin position="341"/>
        <end position="376"/>
    </location>
</feature>
<feature type="compositionally biased region" description="Polar residues" evidence="4">
    <location>
        <begin position="380"/>
        <end position="415"/>
    </location>
</feature>
<feature type="compositionally biased region" description="Polar residues" evidence="4">
    <location>
        <begin position="485"/>
        <end position="509"/>
    </location>
</feature>
<feature type="modified residue" description="Phosphoserine" evidence="2">
    <location>
        <position position="64"/>
    </location>
</feature>
<feature type="modified residue" description="Phosphoserine" evidence="2">
    <location>
        <position position="211"/>
    </location>
</feature>
<feature type="cross-link" description="Glycyl lysine isopeptide (Lys-Gly) (interchain with G-Cter in ubiquitin)" evidence="2">
    <location>
        <position position="398"/>
    </location>
</feature>
<keyword id="KW-0007">Acetylation</keyword>
<keyword id="KW-0010">Activator</keyword>
<keyword id="KW-0221">Differentiation</keyword>
<keyword id="KW-0238">DNA-binding</keyword>
<keyword id="KW-1017">Isopeptide bond</keyword>
<keyword id="KW-0539">Nucleus</keyword>
<keyword id="KW-0597">Phosphoprotein</keyword>
<keyword id="KW-0804">Transcription</keyword>
<keyword id="KW-0805">Transcription regulation</keyword>
<keyword id="KW-0832">Ubl conjugation</keyword>
<gene>
    <name type="primary">SOX9</name>
</gene>